<keyword id="KW-0472">Membrane</keyword>
<keyword id="KW-0602">Photosynthesis</keyword>
<keyword id="KW-0604">Photosystem II</keyword>
<keyword id="KW-0793">Thylakoid</keyword>
<keyword id="KW-0812">Transmembrane</keyword>
<keyword id="KW-1133">Transmembrane helix</keyword>
<comment type="function">
    <text evidence="1">Found at the monomer-monomer interface of the photosystem II (PS II) dimer, plays a role in assembly and dimerization of PSII. PSII is a light-driven water plastoquinone oxidoreductase, using light energy to abstract electrons from H(2)O, generating a proton gradient subsequently used for ATP formation.</text>
</comment>
<comment type="subunit">
    <text evidence="2">PSII is composed of 1 copy each of membrane proteins PsbA, PsbB, PsbC, PsbD, PsbE, PsbF, PsbH, PsbI, PsbJ, PsbK, PsbL, PsbM, PsbT, PsbX, PsbY, Psb30/Ycf12, peripheral proteins PsbO, CyanoQ (PsbQ), PsbU, PsbV and a large number of cofactors. It forms dimeric complexes.</text>
</comment>
<comment type="subcellular location">
    <subcellularLocation>
        <location evidence="1">Cellular thylakoid membrane</location>
        <topology evidence="1">Single-pass membrane protein</topology>
    </subcellularLocation>
</comment>
<comment type="similarity">
    <text evidence="1">Belongs to the PsbT family.</text>
</comment>
<reference key="1">
    <citation type="journal article" date="2007" name="PLoS Genet.">
        <title>Patterns and implications of gene gain and loss in the evolution of Prochlorococcus.</title>
        <authorList>
            <person name="Kettler G.C."/>
            <person name="Martiny A.C."/>
            <person name="Huang K."/>
            <person name="Zucker J."/>
            <person name="Coleman M.L."/>
            <person name="Rodrigue S."/>
            <person name="Chen F."/>
            <person name="Lapidus A."/>
            <person name="Ferriera S."/>
            <person name="Johnson J."/>
            <person name="Steglich C."/>
            <person name="Church G.M."/>
            <person name="Richardson P."/>
            <person name="Chisholm S.W."/>
        </authorList>
    </citation>
    <scope>NUCLEOTIDE SEQUENCE [LARGE SCALE GENOMIC DNA]</scope>
    <source>
        <strain>AS9601</strain>
    </source>
</reference>
<protein>
    <recommendedName>
        <fullName evidence="1">Photosystem II reaction center protein T</fullName>
        <shortName evidence="1">PSII-T</shortName>
    </recommendedName>
</protein>
<sequence length="32" mass="3690">MEAFAYVLILTLAVVTLFFAVAFRDPPKFDRK</sequence>
<gene>
    <name evidence="1" type="primary">psbT</name>
    <name type="ordered locus">A9601_03381</name>
</gene>
<accession>A2BPB5</accession>
<dbReference type="EMBL" id="CP000551">
    <property type="protein sequence ID" value="ABM69626.1"/>
    <property type="molecule type" value="Genomic_DNA"/>
</dbReference>
<dbReference type="RefSeq" id="WP_011131951.1">
    <property type="nucleotide sequence ID" value="NC_008816.1"/>
</dbReference>
<dbReference type="SMR" id="A2BPB5"/>
<dbReference type="STRING" id="146891.A9601_03381"/>
<dbReference type="KEGG" id="pmb:A9601_03381"/>
<dbReference type="HOGENOM" id="CLU_217078_1_0_3"/>
<dbReference type="OrthoDB" id="427659at2"/>
<dbReference type="Proteomes" id="UP000002590">
    <property type="component" value="Chromosome"/>
</dbReference>
<dbReference type="GO" id="GO:0009539">
    <property type="term" value="C:photosystem II reaction center"/>
    <property type="evidence" value="ECO:0007669"/>
    <property type="project" value="InterPro"/>
</dbReference>
<dbReference type="GO" id="GO:0031676">
    <property type="term" value="C:plasma membrane-derived thylakoid membrane"/>
    <property type="evidence" value="ECO:0007669"/>
    <property type="project" value="UniProtKB-SubCell"/>
</dbReference>
<dbReference type="GO" id="GO:0015979">
    <property type="term" value="P:photosynthesis"/>
    <property type="evidence" value="ECO:0007669"/>
    <property type="project" value="UniProtKB-UniRule"/>
</dbReference>
<dbReference type="HAMAP" id="MF_00808">
    <property type="entry name" value="PSII_PsbT"/>
    <property type="match status" value="1"/>
</dbReference>
<dbReference type="InterPro" id="IPR001743">
    <property type="entry name" value="PSII_PsbT"/>
</dbReference>
<dbReference type="InterPro" id="IPR037268">
    <property type="entry name" value="PSII_PsbT_sf"/>
</dbReference>
<dbReference type="NCBIfam" id="NF008825">
    <property type="entry name" value="PRK11875.1"/>
    <property type="match status" value="1"/>
</dbReference>
<dbReference type="Pfam" id="PF01405">
    <property type="entry name" value="PsbT"/>
    <property type="match status" value="1"/>
</dbReference>
<dbReference type="SUPFAM" id="SSF161029">
    <property type="entry name" value="Photosystem II reaction center protein T, PsbT"/>
    <property type="match status" value="1"/>
</dbReference>
<evidence type="ECO:0000255" key="1">
    <source>
        <dbReference type="HAMAP-Rule" id="MF_00808"/>
    </source>
</evidence>
<evidence type="ECO:0000305" key="2"/>
<proteinExistence type="inferred from homology"/>
<feature type="chain" id="PRO_1000047097" description="Photosystem II reaction center protein T">
    <location>
        <begin position="1"/>
        <end position="32"/>
    </location>
</feature>
<feature type="transmembrane region" description="Helical" evidence="1">
    <location>
        <begin position="3"/>
        <end position="23"/>
    </location>
</feature>
<organism>
    <name type="scientific">Prochlorococcus marinus (strain AS9601)</name>
    <dbReference type="NCBI Taxonomy" id="146891"/>
    <lineage>
        <taxon>Bacteria</taxon>
        <taxon>Bacillati</taxon>
        <taxon>Cyanobacteriota</taxon>
        <taxon>Cyanophyceae</taxon>
        <taxon>Synechococcales</taxon>
        <taxon>Prochlorococcaceae</taxon>
        <taxon>Prochlorococcus</taxon>
    </lineage>
</organism>
<name>PSBT_PROMS</name>